<comment type="function">
    <text evidence="1">NAD-binding protein involved in the addition of a carboxymethylaminomethyl (cmnm) group at the wobble position (U34) of certain tRNAs, forming tRNA-cmnm(5)s(2)U34.</text>
</comment>
<comment type="cofactor">
    <cofactor evidence="1">
        <name>FAD</name>
        <dbReference type="ChEBI" id="CHEBI:57692"/>
    </cofactor>
</comment>
<comment type="subunit">
    <text evidence="1">Homodimer. Heterotetramer of two MnmE and two MnmG subunits.</text>
</comment>
<comment type="subcellular location">
    <subcellularLocation>
        <location evidence="1">Cytoplasm</location>
    </subcellularLocation>
</comment>
<comment type="similarity">
    <text evidence="1">Belongs to the MnmG family.</text>
</comment>
<protein>
    <recommendedName>
        <fullName evidence="1">tRNA uridine 5-carboxymethylaminomethyl modification enzyme MnmG</fullName>
    </recommendedName>
    <alternativeName>
        <fullName evidence="1">Glucose-inhibited division protein A</fullName>
    </alternativeName>
</protein>
<gene>
    <name evidence="1" type="primary">mnmG</name>
    <name evidence="1" type="synonym">gidA</name>
    <name type="ordered locus">VP3080</name>
</gene>
<dbReference type="EMBL" id="BA000031">
    <property type="protein sequence ID" value="BAC61343.1"/>
    <property type="molecule type" value="Genomic_DNA"/>
</dbReference>
<dbReference type="RefSeq" id="NP_799459.1">
    <property type="nucleotide sequence ID" value="NC_004603.1"/>
</dbReference>
<dbReference type="RefSeq" id="WP_005481156.1">
    <property type="nucleotide sequence ID" value="NC_004603.1"/>
</dbReference>
<dbReference type="SMR" id="Q87K98"/>
<dbReference type="GeneID" id="1190679"/>
<dbReference type="KEGG" id="vpa:VP3080"/>
<dbReference type="PATRIC" id="fig|223926.6.peg.2966"/>
<dbReference type="eggNOG" id="COG0445">
    <property type="taxonomic scope" value="Bacteria"/>
</dbReference>
<dbReference type="HOGENOM" id="CLU_007831_2_2_6"/>
<dbReference type="Proteomes" id="UP000002493">
    <property type="component" value="Chromosome 1"/>
</dbReference>
<dbReference type="GO" id="GO:0005829">
    <property type="term" value="C:cytosol"/>
    <property type="evidence" value="ECO:0007669"/>
    <property type="project" value="TreeGrafter"/>
</dbReference>
<dbReference type="GO" id="GO:0050660">
    <property type="term" value="F:flavin adenine dinucleotide binding"/>
    <property type="evidence" value="ECO:0007669"/>
    <property type="project" value="UniProtKB-UniRule"/>
</dbReference>
<dbReference type="GO" id="GO:0030488">
    <property type="term" value="P:tRNA methylation"/>
    <property type="evidence" value="ECO:0007669"/>
    <property type="project" value="TreeGrafter"/>
</dbReference>
<dbReference type="GO" id="GO:0002098">
    <property type="term" value="P:tRNA wobble uridine modification"/>
    <property type="evidence" value="ECO:0007669"/>
    <property type="project" value="InterPro"/>
</dbReference>
<dbReference type="FunFam" id="1.10.10.1800:FF:000001">
    <property type="entry name" value="tRNA uridine 5-carboxymethylaminomethyl modification enzyme MnmG"/>
    <property type="match status" value="1"/>
</dbReference>
<dbReference type="FunFam" id="1.10.150.570:FF:000001">
    <property type="entry name" value="tRNA uridine 5-carboxymethylaminomethyl modification enzyme MnmG"/>
    <property type="match status" value="1"/>
</dbReference>
<dbReference type="FunFam" id="3.50.50.60:FF:000002">
    <property type="entry name" value="tRNA uridine 5-carboxymethylaminomethyl modification enzyme MnmG"/>
    <property type="match status" value="1"/>
</dbReference>
<dbReference type="FunFam" id="3.50.50.60:FF:000010">
    <property type="entry name" value="tRNA uridine 5-carboxymethylaminomethyl modification enzyme MnmG"/>
    <property type="match status" value="1"/>
</dbReference>
<dbReference type="Gene3D" id="3.50.50.60">
    <property type="entry name" value="FAD/NAD(P)-binding domain"/>
    <property type="match status" value="2"/>
</dbReference>
<dbReference type="Gene3D" id="1.10.150.570">
    <property type="entry name" value="GidA associated domain, C-terminal subdomain"/>
    <property type="match status" value="1"/>
</dbReference>
<dbReference type="Gene3D" id="1.10.10.1800">
    <property type="entry name" value="tRNA uridine 5-carboxymethylaminomethyl modification enzyme MnmG/GidA"/>
    <property type="match status" value="1"/>
</dbReference>
<dbReference type="HAMAP" id="MF_00129">
    <property type="entry name" value="MnmG_GidA"/>
    <property type="match status" value="1"/>
</dbReference>
<dbReference type="InterPro" id="IPR036188">
    <property type="entry name" value="FAD/NAD-bd_sf"/>
</dbReference>
<dbReference type="InterPro" id="IPR049312">
    <property type="entry name" value="GIDA_C_N"/>
</dbReference>
<dbReference type="InterPro" id="IPR004416">
    <property type="entry name" value="MnmG"/>
</dbReference>
<dbReference type="InterPro" id="IPR002218">
    <property type="entry name" value="MnmG-rel"/>
</dbReference>
<dbReference type="InterPro" id="IPR020595">
    <property type="entry name" value="MnmG-rel_CS"/>
</dbReference>
<dbReference type="InterPro" id="IPR026904">
    <property type="entry name" value="MnmG_C"/>
</dbReference>
<dbReference type="InterPro" id="IPR047001">
    <property type="entry name" value="MnmG_C_subdom"/>
</dbReference>
<dbReference type="InterPro" id="IPR044920">
    <property type="entry name" value="MnmG_C_subdom_sf"/>
</dbReference>
<dbReference type="InterPro" id="IPR040131">
    <property type="entry name" value="MnmG_N"/>
</dbReference>
<dbReference type="NCBIfam" id="TIGR00136">
    <property type="entry name" value="mnmG_gidA"/>
    <property type="match status" value="1"/>
</dbReference>
<dbReference type="PANTHER" id="PTHR11806">
    <property type="entry name" value="GLUCOSE INHIBITED DIVISION PROTEIN A"/>
    <property type="match status" value="1"/>
</dbReference>
<dbReference type="PANTHER" id="PTHR11806:SF0">
    <property type="entry name" value="PROTEIN MTO1 HOMOLOG, MITOCHONDRIAL"/>
    <property type="match status" value="1"/>
</dbReference>
<dbReference type="Pfam" id="PF01134">
    <property type="entry name" value="GIDA"/>
    <property type="match status" value="1"/>
</dbReference>
<dbReference type="Pfam" id="PF21680">
    <property type="entry name" value="GIDA_C_1st"/>
    <property type="match status" value="1"/>
</dbReference>
<dbReference type="Pfam" id="PF13932">
    <property type="entry name" value="SAM_GIDA_C"/>
    <property type="match status" value="1"/>
</dbReference>
<dbReference type="SMART" id="SM01228">
    <property type="entry name" value="GIDA_assoc_3"/>
    <property type="match status" value="1"/>
</dbReference>
<dbReference type="SUPFAM" id="SSF51905">
    <property type="entry name" value="FAD/NAD(P)-binding domain"/>
    <property type="match status" value="1"/>
</dbReference>
<dbReference type="PROSITE" id="PS01280">
    <property type="entry name" value="GIDA_1"/>
    <property type="match status" value="1"/>
</dbReference>
<dbReference type="PROSITE" id="PS01281">
    <property type="entry name" value="GIDA_2"/>
    <property type="match status" value="1"/>
</dbReference>
<organism>
    <name type="scientific">Vibrio parahaemolyticus serotype O3:K6 (strain RIMD 2210633)</name>
    <dbReference type="NCBI Taxonomy" id="223926"/>
    <lineage>
        <taxon>Bacteria</taxon>
        <taxon>Pseudomonadati</taxon>
        <taxon>Pseudomonadota</taxon>
        <taxon>Gammaproteobacteria</taxon>
        <taxon>Vibrionales</taxon>
        <taxon>Vibrionaceae</taxon>
        <taxon>Vibrio</taxon>
    </lineage>
</organism>
<keyword id="KW-0963">Cytoplasm</keyword>
<keyword id="KW-0274">FAD</keyword>
<keyword id="KW-0285">Flavoprotein</keyword>
<keyword id="KW-0520">NAD</keyword>
<keyword id="KW-0819">tRNA processing</keyword>
<name>MNMG_VIBPA</name>
<accession>Q87K98</accession>
<sequence>MLYHENFDVIVVGGGHAGTEAALASARTGQKTLLLTHNIDTLGQMSCNPAIGGIGKGHLVKEVDAMGGLMAEAIDHAGIQFRTLNASKGPAVRATRAQADRALYKAYVRNALENAPNLTLFQQSVDDLIVEQDRVVGVVTQMGLKFHAKAVVLTVGTFLGGKIHIGMESSSGGRAGDPPSIALADRLRELPFRVDRLKTGTPPRIDARTVDFSVLEAQHGDNPTPVFSFMGKREHHPRQIPCFITHTNEQTHEVIRNNLDRSPMYAGVIEGIGPRYCPSIEDKVMRFADKNSHQIFIEPEGLTTHELYPNGISTSLPFDVQVQIVRSMKGFENAHIVRPGYAIEYDFFDPRDLKQTYETKFISGLFFAGQINGTTGYEEAAAQGLMAGLNASLYSQGKEGWSPRRDQAYMGVLIDDLSTMGTKEPYRMFTSRAEYRLLLREDNADLRLTEKARELGLIDDVRWARFNEKIENMETERQRLKSTWVNPNSAGIDELNKLLKTPMAREASGEDLLRRPEISYSQLTQLDAFAPALEDQQAAEQVEIQVKYDGYIKRQQEEIEKSLRHEHTKLPADLDYKDVKGLSNEVVAKLSEAKPESIGIASRISGITPAAISILLVHLKKHGLLKKGEEE</sequence>
<reference key="1">
    <citation type="journal article" date="2003" name="Lancet">
        <title>Genome sequence of Vibrio parahaemolyticus: a pathogenic mechanism distinct from that of V. cholerae.</title>
        <authorList>
            <person name="Makino K."/>
            <person name="Oshima K."/>
            <person name="Kurokawa K."/>
            <person name="Yokoyama K."/>
            <person name="Uda T."/>
            <person name="Tagomori K."/>
            <person name="Iijima Y."/>
            <person name="Najima M."/>
            <person name="Nakano M."/>
            <person name="Yamashita A."/>
            <person name="Kubota Y."/>
            <person name="Kimura S."/>
            <person name="Yasunaga T."/>
            <person name="Honda T."/>
            <person name="Shinagawa H."/>
            <person name="Hattori M."/>
            <person name="Iida T."/>
        </authorList>
    </citation>
    <scope>NUCLEOTIDE SEQUENCE [LARGE SCALE GENOMIC DNA]</scope>
    <source>
        <strain>RIMD 2210633</strain>
    </source>
</reference>
<evidence type="ECO:0000255" key="1">
    <source>
        <dbReference type="HAMAP-Rule" id="MF_00129"/>
    </source>
</evidence>
<feature type="chain" id="PRO_0000117210" description="tRNA uridine 5-carboxymethylaminomethyl modification enzyme MnmG">
    <location>
        <begin position="1"/>
        <end position="631"/>
    </location>
</feature>
<feature type="binding site" evidence="1">
    <location>
        <begin position="13"/>
        <end position="18"/>
    </location>
    <ligand>
        <name>FAD</name>
        <dbReference type="ChEBI" id="CHEBI:57692"/>
    </ligand>
</feature>
<feature type="binding site" evidence="1">
    <location>
        <position position="125"/>
    </location>
    <ligand>
        <name>FAD</name>
        <dbReference type="ChEBI" id="CHEBI:57692"/>
    </ligand>
</feature>
<feature type="binding site" evidence="1">
    <location>
        <position position="180"/>
    </location>
    <ligand>
        <name>FAD</name>
        <dbReference type="ChEBI" id="CHEBI:57692"/>
    </ligand>
</feature>
<feature type="binding site" evidence="1">
    <location>
        <begin position="273"/>
        <end position="287"/>
    </location>
    <ligand>
        <name>NAD(+)</name>
        <dbReference type="ChEBI" id="CHEBI:57540"/>
    </ligand>
</feature>
<feature type="binding site" evidence="1">
    <location>
        <position position="370"/>
    </location>
    <ligand>
        <name>FAD</name>
        <dbReference type="ChEBI" id="CHEBI:57692"/>
    </ligand>
</feature>
<proteinExistence type="inferred from homology"/>